<dbReference type="EMBL" id="AY362749">
    <property type="protein sequence ID" value="AAR13358.1"/>
    <property type="molecule type" value="Genomic_DNA"/>
</dbReference>
<dbReference type="RefSeq" id="NP_001160161.1">
    <property type="nucleotide sequence ID" value="NM_001166689.1"/>
</dbReference>
<dbReference type="SMR" id="Q67ES1"/>
<dbReference type="FunCoup" id="Q67ES1">
    <property type="interactions" value="80"/>
</dbReference>
<dbReference type="STRING" id="10116.ENSRNOP00000051522"/>
<dbReference type="GlyCosmos" id="Q67ES1">
    <property type="glycosylation" value="1 site, No reported glycans"/>
</dbReference>
<dbReference type="GlyGen" id="Q67ES1">
    <property type="glycosylation" value="1 site"/>
</dbReference>
<dbReference type="PaxDb" id="10116-ENSRNOP00000051522"/>
<dbReference type="Ensembl" id="ENSRNOT00000050409.2">
    <property type="protein sequence ID" value="ENSRNOP00000051522.1"/>
    <property type="gene ID" value="ENSRNOG00000030752.2"/>
</dbReference>
<dbReference type="GeneID" id="100310885"/>
<dbReference type="KEGG" id="rno:100310885"/>
<dbReference type="UCSC" id="RGD:2314255">
    <property type="organism name" value="rat"/>
</dbReference>
<dbReference type="AGR" id="RGD:2314255"/>
<dbReference type="CTD" id="387345"/>
<dbReference type="RGD" id="2314255">
    <property type="gene designation" value="Tas2r113"/>
</dbReference>
<dbReference type="eggNOG" id="ENOG502SKRK">
    <property type="taxonomic scope" value="Eukaryota"/>
</dbReference>
<dbReference type="GeneTree" id="ENSGT01100000263477"/>
<dbReference type="HOGENOM" id="CLU_072337_3_0_1"/>
<dbReference type="InParanoid" id="Q67ES1"/>
<dbReference type="OMA" id="PERYLIF"/>
<dbReference type="OrthoDB" id="8876749at2759"/>
<dbReference type="PhylomeDB" id="Q67ES1"/>
<dbReference type="TreeFam" id="TF335891"/>
<dbReference type="PRO" id="PR:Q67ES1"/>
<dbReference type="Proteomes" id="UP000002494">
    <property type="component" value="Chromosome 4"/>
</dbReference>
<dbReference type="GO" id="GO:0016020">
    <property type="term" value="C:membrane"/>
    <property type="evidence" value="ECO:0000318"/>
    <property type="project" value="GO_Central"/>
</dbReference>
<dbReference type="GO" id="GO:0033038">
    <property type="term" value="F:bitter taste receptor activity"/>
    <property type="evidence" value="ECO:0000318"/>
    <property type="project" value="GO_Central"/>
</dbReference>
<dbReference type="GO" id="GO:0004930">
    <property type="term" value="F:G protein-coupled receptor activity"/>
    <property type="evidence" value="ECO:0007669"/>
    <property type="project" value="UniProtKB-KW"/>
</dbReference>
<dbReference type="GO" id="GO:0001580">
    <property type="term" value="P:detection of chemical stimulus involved in sensory perception of bitter taste"/>
    <property type="evidence" value="ECO:0000318"/>
    <property type="project" value="GO_Central"/>
</dbReference>
<dbReference type="CDD" id="cd15019">
    <property type="entry name" value="7tm_TAS2R14-like"/>
    <property type="match status" value="1"/>
</dbReference>
<dbReference type="FunFam" id="1.20.1070.10:FF:000042">
    <property type="entry name" value="Taste receptor type 2 member 7"/>
    <property type="match status" value="1"/>
</dbReference>
<dbReference type="Gene3D" id="1.20.1070.10">
    <property type="entry name" value="Rhodopsin 7-helix transmembrane proteins"/>
    <property type="match status" value="1"/>
</dbReference>
<dbReference type="InterPro" id="IPR007960">
    <property type="entry name" value="TAS2R"/>
</dbReference>
<dbReference type="PANTHER" id="PTHR11394">
    <property type="entry name" value="TASTE RECEPTOR TYPE 2"/>
    <property type="match status" value="1"/>
</dbReference>
<dbReference type="PANTHER" id="PTHR11394:SF42">
    <property type="entry name" value="TASTE RECEPTOR TYPE 2 MEMBER 113"/>
    <property type="match status" value="1"/>
</dbReference>
<dbReference type="Pfam" id="PF05296">
    <property type="entry name" value="TAS2R"/>
    <property type="match status" value="1"/>
</dbReference>
<dbReference type="SUPFAM" id="SSF81321">
    <property type="entry name" value="Family A G protein-coupled receptor-like"/>
    <property type="match status" value="1"/>
</dbReference>
<sequence>MVAVLQSTFAIIFSMEFIVGTLGNGFIILMTCIDWVRRRKISLVDQILTALAITRITLILLVFIDWWVSVLFPALHETGKILRMYFISWTVINHCNLWLTASLSIIYFLKIASFSSIIFLYLKFRVKNVVFVTLLVSLFFLFINTAIVNVYFDVCFDGVQRNVSQVSRLYNHEQICKFLSFTNPMFAFIPFVTSMATFFLLIFSLWRHLKNMKHNAEGCRDVSTIVHIRALQTIIVSVVLYSTFFLSFFVKVWSSGSPERYLIFLFVWALGNAVLPAHTFVLIWGNCRLRWASLSLMLWLRYRFKNIDV</sequence>
<protein>
    <recommendedName>
        <fullName>Taste receptor type 2 member 113</fullName>
        <shortName>T2R113</shortName>
    </recommendedName>
    <alternativeName>
        <fullName>Taste receptor type 2 member 30</fullName>
        <shortName>T2R30</shortName>
    </alternativeName>
</protein>
<gene>
    <name evidence="1" type="primary">Tas2r113</name>
    <name type="synonym">Tas2r30</name>
</gene>
<accession>Q67ES1</accession>
<comment type="function">
    <text evidence="3">Putative taste receptor which may play a role in the perception of bitterness.</text>
</comment>
<comment type="subcellular location">
    <subcellularLocation>
        <location evidence="3">Membrane</location>
        <topology evidence="3">Multi-pass membrane protein</topology>
    </subcellularLocation>
</comment>
<comment type="miscellaneous">
    <text evidence="3">Several bitter taste receptors are expressed in a single taste receptor cell.</text>
</comment>
<comment type="similarity">
    <text evidence="2">Belongs to the G-protein coupled receptor T2R family.</text>
</comment>
<evidence type="ECO:0000250" key="1">
    <source>
        <dbReference type="UniProtKB" id="Q7M711"/>
    </source>
</evidence>
<evidence type="ECO:0000255" key="2"/>
<evidence type="ECO:0000305" key="3"/>
<evidence type="ECO:0000312" key="4">
    <source>
        <dbReference type="EMBL" id="AAR13358.1"/>
    </source>
</evidence>
<reference evidence="4" key="1">
    <citation type="submission" date="2003-08" db="EMBL/GenBank/DDBJ databases">
        <title>Identification of new putative rat taste receptors belonging to the T2R family.</title>
        <authorList>
            <person name="Conte C."/>
            <person name="Ebeling M."/>
            <person name="Marcuz A."/>
            <person name="Andres-Barquin P.J."/>
        </authorList>
    </citation>
    <scope>NUCLEOTIDE SEQUENCE [GENOMIC DNA]</scope>
    <source>
        <strain evidence="4">Sprague-Dawley</strain>
    </source>
</reference>
<proteinExistence type="inferred from homology"/>
<keyword id="KW-0297">G-protein coupled receptor</keyword>
<keyword id="KW-0325">Glycoprotein</keyword>
<keyword id="KW-0472">Membrane</keyword>
<keyword id="KW-0675">Receptor</keyword>
<keyword id="KW-1185">Reference proteome</keyword>
<keyword id="KW-0716">Sensory transduction</keyword>
<keyword id="KW-0919">Taste</keyword>
<keyword id="KW-0807">Transducer</keyword>
<keyword id="KW-0812">Transmembrane</keyword>
<keyword id="KW-1133">Transmembrane helix</keyword>
<feature type="chain" id="PRO_0000248257" description="Taste receptor type 2 member 113">
    <location>
        <begin position="1"/>
        <end position="309"/>
    </location>
</feature>
<feature type="topological domain" description="Extracellular" evidence="2">
    <location>
        <begin position="1"/>
        <end position="8"/>
    </location>
</feature>
<feature type="transmembrane region" description="Helical; Name=1" evidence="2">
    <location>
        <begin position="9"/>
        <end position="29"/>
    </location>
</feature>
<feature type="topological domain" description="Cytoplasmic" evidence="2">
    <location>
        <begin position="30"/>
        <end position="55"/>
    </location>
</feature>
<feature type="transmembrane region" description="Helical; Name=2" evidence="2">
    <location>
        <begin position="56"/>
        <end position="76"/>
    </location>
</feature>
<feature type="topological domain" description="Extracellular" evidence="2">
    <location>
        <begin position="77"/>
        <end position="101"/>
    </location>
</feature>
<feature type="transmembrane region" description="Helical; Name=3" evidence="2">
    <location>
        <begin position="102"/>
        <end position="122"/>
    </location>
</feature>
<feature type="topological domain" description="Cytoplasmic" evidence="2">
    <location>
        <begin position="123"/>
        <end position="127"/>
    </location>
</feature>
<feature type="transmembrane region" description="Helical; Name=4" evidence="2">
    <location>
        <begin position="128"/>
        <end position="148"/>
    </location>
</feature>
<feature type="topological domain" description="Extracellular" evidence="2">
    <location>
        <begin position="149"/>
        <end position="185"/>
    </location>
</feature>
<feature type="transmembrane region" description="Helical; Name=5" evidence="2">
    <location>
        <begin position="186"/>
        <end position="206"/>
    </location>
</feature>
<feature type="topological domain" description="Cytoplasmic" evidence="2">
    <location>
        <begin position="207"/>
        <end position="229"/>
    </location>
</feature>
<feature type="transmembrane region" description="Helical; Name=6" evidence="2">
    <location>
        <begin position="230"/>
        <end position="250"/>
    </location>
</feature>
<feature type="topological domain" description="Extracellular" evidence="2">
    <location>
        <begin position="251"/>
        <end position="262"/>
    </location>
</feature>
<feature type="transmembrane region" description="Helical; Name=7" evidence="2">
    <location>
        <begin position="263"/>
        <end position="283"/>
    </location>
</feature>
<feature type="topological domain" description="Cytoplasmic" evidence="2">
    <location>
        <begin position="284"/>
        <end position="309"/>
    </location>
</feature>
<feature type="glycosylation site" description="N-linked (GlcNAc...) asparagine" evidence="2">
    <location>
        <position position="162"/>
    </location>
</feature>
<organism>
    <name type="scientific">Rattus norvegicus</name>
    <name type="common">Rat</name>
    <dbReference type="NCBI Taxonomy" id="10116"/>
    <lineage>
        <taxon>Eukaryota</taxon>
        <taxon>Metazoa</taxon>
        <taxon>Chordata</taxon>
        <taxon>Craniata</taxon>
        <taxon>Vertebrata</taxon>
        <taxon>Euteleostomi</taxon>
        <taxon>Mammalia</taxon>
        <taxon>Eutheria</taxon>
        <taxon>Euarchontoglires</taxon>
        <taxon>Glires</taxon>
        <taxon>Rodentia</taxon>
        <taxon>Myomorpha</taxon>
        <taxon>Muroidea</taxon>
        <taxon>Muridae</taxon>
        <taxon>Murinae</taxon>
        <taxon>Rattus</taxon>
    </lineage>
</organism>
<name>TR113_RAT</name>